<accession>Q5YZH9</accession>
<comment type="function">
    <text evidence="1">Part of the high-affinity ATP-driven potassium transport (or Kdp) system, which catalyzes the hydrolysis of ATP coupled with the electrogenic transport of potassium into the cytoplasm. This subunit binds the extracellular potassium ions and delivers the ions to the membrane domain of KdpB through an intramembrane tunnel.</text>
</comment>
<comment type="subunit">
    <text evidence="1">The system is composed of three essential subunits: KdpA, KdpB and KdpC.</text>
</comment>
<comment type="subcellular location">
    <subcellularLocation>
        <location evidence="1">Cell membrane</location>
        <topology evidence="1">Multi-pass membrane protein</topology>
    </subcellularLocation>
</comment>
<comment type="similarity">
    <text evidence="1">Belongs to the KdpA family.</text>
</comment>
<name>KDPA_NOCFA</name>
<keyword id="KW-1003">Cell membrane</keyword>
<keyword id="KW-0406">Ion transport</keyword>
<keyword id="KW-0472">Membrane</keyword>
<keyword id="KW-0630">Potassium</keyword>
<keyword id="KW-0633">Potassium transport</keyword>
<keyword id="KW-1185">Reference proteome</keyword>
<keyword id="KW-0812">Transmembrane</keyword>
<keyword id="KW-1133">Transmembrane helix</keyword>
<keyword id="KW-0813">Transport</keyword>
<reference key="1">
    <citation type="journal article" date="2004" name="Proc. Natl. Acad. Sci. U.S.A.">
        <title>The complete genomic sequence of Nocardia farcinica IFM 10152.</title>
        <authorList>
            <person name="Ishikawa J."/>
            <person name="Yamashita A."/>
            <person name="Mikami Y."/>
            <person name="Hoshino Y."/>
            <person name="Kurita H."/>
            <person name="Hotta K."/>
            <person name="Shiba T."/>
            <person name="Hattori M."/>
        </authorList>
    </citation>
    <scope>NUCLEOTIDE SEQUENCE [LARGE SCALE GENOMIC DNA]</scope>
    <source>
        <strain>IFM 10152</strain>
    </source>
</reference>
<evidence type="ECO:0000255" key="1">
    <source>
        <dbReference type="HAMAP-Rule" id="MF_00275"/>
    </source>
</evidence>
<protein>
    <recommendedName>
        <fullName evidence="1">Potassium-transporting ATPase potassium-binding subunit</fullName>
    </recommendedName>
    <alternativeName>
        <fullName evidence="1">ATP phosphohydrolase [potassium-transporting] A chain</fullName>
    </alternativeName>
    <alternativeName>
        <fullName evidence="1">Potassium-binding and translocating subunit A</fullName>
    </alternativeName>
    <alternativeName>
        <fullName evidence="1">Potassium-translocating ATPase A chain</fullName>
    </alternativeName>
</protein>
<sequence>MSPALAAGLQIASVVAVLALVYVPLGDYMARVYTSSSDLRAESWLYRLARVDPRAEQTWCGYAGSVLGFSLAGVLVLYVLQRIQGVLPLSHGLAGVSPAVAFNTAVSFVTNTNWQSYVPETTMSPLTQSAGLAVQNFVSAAVGMAVAVALIRGLVRVGRGGEVGNFWVDLTRGTLRILLPLAFVIALILLSQGVIQSYRSGFTGVGLDGRPVTTALAPVASQEAIKELGTNGGGVLAANSAHPFENPTPLSNVVQILAILLIPVALTRTFGTMIGNRRQGLTVLAVMAGIYAVILGVTTAAESGARGAAATAAGAMLEGKEVRFGIPGSVLFAVSTTGTSTGAVNSAHDSMSPLGGGAVLVNMLLGEIAPGGVGSGLYGILVLAVIAVFVGGLLVGRTPEFLGKKLRRREITLAALAVLVMPALVLIGTAITVVLPETAAALGNSGDPGTPGAVHGFSEVLYAYASASNNNGSAFGGLTVTSDWFQSSLGLCMLFGRFLPILFVLALAGSLAAQPRTPATAGTLPTAGAGFAGLLTGTVVLVAALTFFPVLALGPIAEALQ</sequence>
<organism>
    <name type="scientific">Nocardia farcinica (strain IFM 10152)</name>
    <dbReference type="NCBI Taxonomy" id="247156"/>
    <lineage>
        <taxon>Bacteria</taxon>
        <taxon>Bacillati</taxon>
        <taxon>Actinomycetota</taxon>
        <taxon>Actinomycetes</taxon>
        <taxon>Mycobacteriales</taxon>
        <taxon>Nocardiaceae</taxon>
        <taxon>Nocardia</taxon>
    </lineage>
</organism>
<gene>
    <name evidence="1" type="primary">kdpA</name>
    <name type="ordered locus">NFA_15660</name>
</gene>
<dbReference type="EMBL" id="AP006618">
    <property type="protein sequence ID" value="BAD56412.1"/>
    <property type="molecule type" value="Genomic_DNA"/>
</dbReference>
<dbReference type="RefSeq" id="WP_011208097.1">
    <property type="nucleotide sequence ID" value="NC_006361.1"/>
</dbReference>
<dbReference type="SMR" id="Q5YZH9"/>
<dbReference type="STRING" id="247156.NFA_15660"/>
<dbReference type="GeneID" id="61132357"/>
<dbReference type="KEGG" id="nfa:NFA_15660"/>
<dbReference type="eggNOG" id="COG2060">
    <property type="taxonomic scope" value="Bacteria"/>
</dbReference>
<dbReference type="HOGENOM" id="CLU_018614_3_0_11"/>
<dbReference type="OrthoDB" id="9763796at2"/>
<dbReference type="Proteomes" id="UP000006820">
    <property type="component" value="Chromosome"/>
</dbReference>
<dbReference type="GO" id="GO:0005886">
    <property type="term" value="C:plasma membrane"/>
    <property type="evidence" value="ECO:0007669"/>
    <property type="project" value="UniProtKB-SubCell"/>
</dbReference>
<dbReference type="GO" id="GO:0008556">
    <property type="term" value="F:P-type potassium transmembrane transporter activity"/>
    <property type="evidence" value="ECO:0007669"/>
    <property type="project" value="InterPro"/>
</dbReference>
<dbReference type="GO" id="GO:0030955">
    <property type="term" value="F:potassium ion binding"/>
    <property type="evidence" value="ECO:0007669"/>
    <property type="project" value="UniProtKB-UniRule"/>
</dbReference>
<dbReference type="HAMAP" id="MF_00275">
    <property type="entry name" value="KdpA"/>
    <property type="match status" value="1"/>
</dbReference>
<dbReference type="InterPro" id="IPR004623">
    <property type="entry name" value="KdpA"/>
</dbReference>
<dbReference type="NCBIfam" id="TIGR00680">
    <property type="entry name" value="kdpA"/>
    <property type="match status" value="1"/>
</dbReference>
<dbReference type="PANTHER" id="PTHR30607">
    <property type="entry name" value="POTASSIUM-TRANSPORTING ATPASE A CHAIN"/>
    <property type="match status" value="1"/>
</dbReference>
<dbReference type="PANTHER" id="PTHR30607:SF2">
    <property type="entry name" value="POTASSIUM-TRANSPORTING ATPASE POTASSIUM-BINDING SUBUNIT"/>
    <property type="match status" value="1"/>
</dbReference>
<dbReference type="Pfam" id="PF03814">
    <property type="entry name" value="KdpA"/>
    <property type="match status" value="1"/>
</dbReference>
<dbReference type="PIRSF" id="PIRSF001294">
    <property type="entry name" value="K_ATPaseA"/>
    <property type="match status" value="1"/>
</dbReference>
<feature type="chain" id="PRO_0000166510" description="Potassium-transporting ATPase potassium-binding subunit">
    <location>
        <begin position="1"/>
        <end position="561"/>
    </location>
</feature>
<feature type="transmembrane region" description="Helical" evidence="1">
    <location>
        <begin position="5"/>
        <end position="25"/>
    </location>
</feature>
<feature type="transmembrane region" description="Helical" evidence="1">
    <location>
        <begin position="60"/>
        <end position="80"/>
    </location>
</feature>
<feature type="transmembrane region" description="Helical" evidence="1">
    <location>
        <begin position="86"/>
        <end position="106"/>
    </location>
</feature>
<feature type="transmembrane region" description="Helical" evidence="1">
    <location>
        <begin position="131"/>
        <end position="151"/>
    </location>
</feature>
<feature type="transmembrane region" description="Helical" evidence="1">
    <location>
        <begin position="177"/>
        <end position="197"/>
    </location>
</feature>
<feature type="transmembrane region" description="Helical" evidence="1">
    <location>
        <begin position="247"/>
        <end position="267"/>
    </location>
</feature>
<feature type="transmembrane region" description="Helical" evidence="1">
    <location>
        <begin position="281"/>
        <end position="301"/>
    </location>
</feature>
<feature type="transmembrane region" description="Helical" evidence="1">
    <location>
        <begin position="376"/>
        <end position="396"/>
    </location>
</feature>
<feature type="transmembrane region" description="Helical" evidence="1">
    <location>
        <begin position="415"/>
        <end position="435"/>
    </location>
</feature>
<feature type="transmembrane region" description="Helical" evidence="1">
    <location>
        <begin position="489"/>
        <end position="509"/>
    </location>
</feature>
<feature type="transmembrane region" description="Helical" evidence="1">
    <location>
        <begin position="531"/>
        <end position="551"/>
    </location>
</feature>
<proteinExistence type="inferred from homology"/>